<evidence type="ECO:0000255" key="1">
    <source>
        <dbReference type="HAMAP-Rule" id="MF_01558"/>
    </source>
</evidence>
<evidence type="ECO:0000255" key="2">
    <source>
        <dbReference type="PROSITE-ProRule" id="PRU01083"/>
    </source>
</evidence>
<protein>
    <recommendedName>
        <fullName evidence="1">Cytidine deaminase</fullName>
        <ecNumber evidence="1">3.5.4.5</ecNumber>
    </recommendedName>
    <alternativeName>
        <fullName evidence="1">Cytidine aminohydrolase</fullName>
        <shortName evidence="1">CDA</shortName>
    </alternativeName>
</protein>
<comment type="function">
    <text evidence="1">This enzyme scavenges exogenous and endogenous cytidine and 2'-deoxycytidine for UMP synthesis.</text>
</comment>
<comment type="catalytic activity">
    <reaction evidence="1">
        <text>cytidine + H2O + H(+) = uridine + NH4(+)</text>
        <dbReference type="Rhea" id="RHEA:16069"/>
        <dbReference type="ChEBI" id="CHEBI:15377"/>
        <dbReference type="ChEBI" id="CHEBI:15378"/>
        <dbReference type="ChEBI" id="CHEBI:16704"/>
        <dbReference type="ChEBI" id="CHEBI:17562"/>
        <dbReference type="ChEBI" id="CHEBI:28938"/>
        <dbReference type="EC" id="3.5.4.5"/>
    </reaction>
</comment>
<comment type="catalytic activity">
    <reaction evidence="1">
        <text>2'-deoxycytidine + H2O + H(+) = 2'-deoxyuridine + NH4(+)</text>
        <dbReference type="Rhea" id="RHEA:13433"/>
        <dbReference type="ChEBI" id="CHEBI:15377"/>
        <dbReference type="ChEBI" id="CHEBI:15378"/>
        <dbReference type="ChEBI" id="CHEBI:15698"/>
        <dbReference type="ChEBI" id="CHEBI:16450"/>
        <dbReference type="ChEBI" id="CHEBI:28938"/>
        <dbReference type="EC" id="3.5.4.5"/>
    </reaction>
</comment>
<comment type="cofactor">
    <cofactor evidence="1">
        <name>Zn(2+)</name>
        <dbReference type="ChEBI" id="CHEBI:29105"/>
    </cofactor>
    <text evidence="1">Binds 1 zinc ion.</text>
</comment>
<comment type="subunit">
    <text evidence="1">Homodimer.</text>
</comment>
<comment type="similarity">
    <text evidence="1">Belongs to the cytidine and deoxycytidylate deaminase family.</text>
</comment>
<feature type="chain" id="PRO_0000171664" description="Cytidine deaminase">
    <location>
        <begin position="1"/>
        <end position="296"/>
    </location>
</feature>
<feature type="domain" description="CMP/dCMP-type deaminase 1" evidence="2">
    <location>
        <begin position="47"/>
        <end position="167"/>
    </location>
</feature>
<feature type="domain" description="CMP/dCMP-type deaminase 2" evidence="2">
    <location>
        <begin position="186"/>
        <end position="296"/>
    </location>
</feature>
<feature type="active site" description="Proton donor" evidence="1">
    <location>
        <position position="103"/>
    </location>
</feature>
<feature type="binding site" evidence="1">
    <location>
        <begin position="88"/>
        <end position="90"/>
    </location>
    <ligand>
        <name>substrate</name>
    </ligand>
</feature>
<feature type="binding site" evidence="1">
    <location>
        <position position="101"/>
    </location>
    <ligand>
        <name>Zn(2+)</name>
        <dbReference type="ChEBI" id="CHEBI:29105"/>
        <note>catalytic</note>
    </ligand>
</feature>
<feature type="binding site" evidence="1">
    <location>
        <position position="128"/>
    </location>
    <ligand>
        <name>Zn(2+)</name>
        <dbReference type="ChEBI" id="CHEBI:29105"/>
        <note>catalytic</note>
    </ligand>
</feature>
<feature type="binding site" evidence="1">
    <location>
        <position position="131"/>
    </location>
    <ligand>
        <name>Zn(2+)</name>
        <dbReference type="ChEBI" id="CHEBI:29105"/>
        <note>catalytic</note>
    </ligand>
</feature>
<keyword id="KW-0378">Hydrolase</keyword>
<keyword id="KW-0479">Metal-binding</keyword>
<keyword id="KW-1185">Reference proteome</keyword>
<keyword id="KW-0862">Zinc</keyword>
<dbReference type="EC" id="3.5.4.5" evidence="1"/>
<dbReference type="EMBL" id="AE014299">
    <property type="protein sequence ID" value="AAN55813.1"/>
    <property type="molecule type" value="Genomic_DNA"/>
</dbReference>
<dbReference type="RefSeq" id="NP_718369.1">
    <property type="nucleotide sequence ID" value="NC_004347.2"/>
</dbReference>
<dbReference type="RefSeq" id="WP_011072724.1">
    <property type="nucleotide sequence ID" value="NC_004347.2"/>
</dbReference>
<dbReference type="SMR" id="Q8EDG1"/>
<dbReference type="STRING" id="211586.SO_2791"/>
<dbReference type="PaxDb" id="211586-SO_2791"/>
<dbReference type="KEGG" id="son:SO_2791"/>
<dbReference type="PATRIC" id="fig|211586.12.peg.2691"/>
<dbReference type="eggNOG" id="COG0295">
    <property type="taxonomic scope" value="Bacteria"/>
</dbReference>
<dbReference type="HOGENOM" id="CLU_052424_0_0_6"/>
<dbReference type="OrthoDB" id="9795347at2"/>
<dbReference type="PhylomeDB" id="Q8EDG1"/>
<dbReference type="BioCyc" id="SONE211586:G1GMP-2577-MONOMER"/>
<dbReference type="Proteomes" id="UP000008186">
    <property type="component" value="Chromosome"/>
</dbReference>
<dbReference type="GO" id="GO:0005829">
    <property type="term" value="C:cytosol"/>
    <property type="evidence" value="ECO:0000318"/>
    <property type="project" value="GO_Central"/>
</dbReference>
<dbReference type="GO" id="GO:0004126">
    <property type="term" value="F:cytidine deaminase activity"/>
    <property type="evidence" value="ECO:0000318"/>
    <property type="project" value="GO_Central"/>
</dbReference>
<dbReference type="GO" id="GO:0042802">
    <property type="term" value="F:identical protein binding"/>
    <property type="evidence" value="ECO:0007669"/>
    <property type="project" value="UniProtKB-ARBA"/>
</dbReference>
<dbReference type="GO" id="GO:0008270">
    <property type="term" value="F:zinc ion binding"/>
    <property type="evidence" value="ECO:0000318"/>
    <property type="project" value="GO_Central"/>
</dbReference>
<dbReference type="GO" id="GO:0009972">
    <property type="term" value="P:cytidine deamination"/>
    <property type="evidence" value="ECO:0000318"/>
    <property type="project" value="GO_Central"/>
</dbReference>
<dbReference type="CDD" id="cd01283">
    <property type="entry name" value="cytidine_deaminase"/>
    <property type="match status" value="1"/>
</dbReference>
<dbReference type="FunFam" id="3.40.140.10:FF:000007">
    <property type="entry name" value="Cytidine deaminase"/>
    <property type="match status" value="1"/>
</dbReference>
<dbReference type="Gene3D" id="3.40.140.10">
    <property type="entry name" value="Cytidine Deaminase, domain 2"/>
    <property type="match status" value="2"/>
</dbReference>
<dbReference type="HAMAP" id="MF_01558">
    <property type="entry name" value="Cyt_deam"/>
    <property type="match status" value="1"/>
</dbReference>
<dbReference type="InterPro" id="IPR016192">
    <property type="entry name" value="APOBEC/CMP_deaminase_Zn-bd"/>
</dbReference>
<dbReference type="InterPro" id="IPR002125">
    <property type="entry name" value="CMP_dCMP_dom"/>
</dbReference>
<dbReference type="InterPro" id="IPR013171">
    <property type="entry name" value="Cyd/dCyd_deaminase_Zn-bd"/>
</dbReference>
<dbReference type="InterPro" id="IPR050202">
    <property type="entry name" value="Cyt/Deoxycyt_deaminase"/>
</dbReference>
<dbReference type="InterPro" id="IPR016193">
    <property type="entry name" value="Cytidine_deaminase-like"/>
</dbReference>
<dbReference type="InterPro" id="IPR020797">
    <property type="entry name" value="Cytidine_deaminase_bacteria"/>
</dbReference>
<dbReference type="NCBIfam" id="NF006537">
    <property type="entry name" value="PRK09027.1"/>
    <property type="match status" value="1"/>
</dbReference>
<dbReference type="PANTHER" id="PTHR11644">
    <property type="entry name" value="CYTIDINE DEAMINASE"/>
    <property type="match status" value="1"/>
</dbReference>
<dbReference type="PANTHER" id="PTHR11644:SF2">
    <property type="entry name" value="CYTIDINE DEAMINASE"/>
    <property type="match status" value="1"/>
</dbReference>
<dbReference type="Pfam" id="PF00383">
    <property type="entry name" value="dCMP_cyt_deam_1"/>
    <property type="match status" value="1"/>
</dbReference>
<dbReference type="Pfam" id="PF08211">
    <property type="entry name" value="dCMP_cyt_deam_2"/>
    <property type="match status" value="1"/>
</dbReference>
<dbReference type="PIRSF" id="PIRSF006334">
    <property type="entry name" value="Cdd_plus_pseudo"/>
    <property type="match status" value="1"/>
</dbReference>
<dbReference type="SUPFAM" id="SSF53927">
    <property type="entry name" value="Cytidine deaminase-like"/>
    <property type="match status" value="2"/>
</dbReference>
<dbReference type="PROSITE" id="PS00903">
    <property type="entry name" value="CYT_DCMP_DEAMINASES_1"/>
    <property type="match status" value="1"/>
</dbReference>
<dbReference type="PROSITE" id="PS51747">
    <property type="entry name" value="CYT_DCMP_DEAMINASES_2"/>
    <property type="match status" value="2"/>
</dbReference>
<proteinExistence type="inferred from homology"/>
<reference key="1">
    <citation type="journal article" date="2002" name="Nat. Biotechnol.">
        <title>Genome sequence of the dissimilatory metal ion-reducing bacterium Shewanella oneidensis.</title>
        <authorList>
            <person name="Heidelberg J.F."/>
            <person name="Paulsen I.T."/>
            <person name="Nelson K.E."/>
            <person name="Gaidos E.J."/>
            <person name="Nelson W.C."/>
            <person name="Read T.D."/>
            <person name="Eisen J.A."/>
            <person name="Seshadri R."/>
            <person name="Ward N.L."/>
            <person name="Methe B.A."/>
            <person name="Clayton R.A."/>
            <person name="Meyer T."/>
            <person name="Tsapin A."/>
            <person name="Scott J."/>
            <person name="Beanan M.J."/>
            <person name="Brinkac L.M."/>
            <person name="Daugherty S.C."/>
            <person name="DeBoy R.T."/>
            <person name="Dodson R.J."/>
            <person name="Durkin A.S."/>
            <person name="Haft D.H."/>
            <person name="Kolonay J.F."/>
            <person name="Madupu R."/>
            <person name="Peterson J.D."/>
            <person name="Umayam L.A."/>
            <person name="White O."/>
            <person name="Wolf A.M."/>
            <person name="Vamathevan J.J."/>
            <person name="Weidman J.F."/>
            <person name="Impraim M."/>
            <person name="Lee K."/>
            <person name="Berry K.J."/>
            <person name="Lee C."/>
            <person name="Mueller J."/>
            <person name="Khouri H.M."/>
            <person name="Gill J."/>
            <person name="Utterback T.R."/>
            <person name="McDonald L.A."/>
            <person name="Feldblyum T.V."/>
            <person name="Smith H.O."/>
            <person name="Venter J.C."/>
            <person name="Nealson K.H."/>
            <person name="Fraser C.M."/>
        </authorList>
    </citation>
    <scope>NUCLEOTIDE SEQUENCE [LARGE SCALE GENOMIC DNA]</scope>
    <source>
        <strain>ATCC 700550 / JCM 31522 / CIP 106686 / LMG 19005 / NCIMB 14063 / MR-1</strain>
    </source>
</reference>
<gene>
    <name evidence="1" type="primary">cdd</name>
    <name type="ordered locus">SO_2791</name>
</gene>
<organism>
    <name type="scientific">Shewanella oneidensis (strain ATCC 700550 / JCM 31522 / CIP 106686 / LMG 19005 / NCIMB 14063 / MR-1)</name>
    <dbReference type="NCBI Taxonomy" id="211586"/>
    <lineage>
        <taxon>Bacteria</taxon>
        <taxon>Pseudomonadati</taxon>
        <taxon>Pseudomonadota</taxon>
        <taxon>Gammaproteobacteria</taxon>
        <taxon>Alteromonadales</taxon>
        <taxon>Shewanellaceae</taxon>
        <taxon>Shewanella</taxon>
    </lineage>
</organism>
<sequence length="296" mass="31985">MQDRFIRSITQLPTPLADALIPLLHQGFAGHIDAQHLAELVKSSNMTESEVLLALLPIAAALAKPPISEFYVGAIAKGKSGDIYMGANLELPGEALFHSVHAEQSAISHAWLSGESQIVDMIVNASPCGHCRQFMNELVDGGQIKIHLPSQDSHLLSYYLPYAFGPKDLNVQSPLLVKQETEFALDSSDPMVIEALDHAGLSYAPYTQSYAAVVLETADGATYCGRYAENAAFNPSMLPMQMALSNLTRHNRDFAEIRRAVLVESSQGKISLVGAAMDALHAVAAIELEHIVVDPI</sequence>
<accession>Q8EDG1</accession>
<name>CDD_SHEON</name>